<dbReference type="EMBL" id="DQ316068">
    <property type="protein sequence ID" value="ABC17896.1"/>
    <property type="molecule type" value="Genomic_DNA"/>
</dbReference>
<dbReference type="RefSeq" id="YP_626372.1">
    <property type="nucleotide sequence ID" value="NC_005129.2"/>
</dbReference>
<dbReference type="SMR" id="Q2I3G9"/>
<dbReference type="GeneID" id="2610361"/>
<dbReference type="CTD" id="4508"/>
<dbReference type="GO" id="GO:0005743">
    <property type="term" value="C:mitochondrial inner membrane"/>
    <property type="evidence" value="ECO:0007669"/>
    <property type="project" value="UniProtKB-SubCell"/>
</dbReference>
<dbReference type="GO" id="GO:0045259">
    <property type="term" value="C:proton-transporting ATP synthase complex"/>
    <property type="evidence" value="ECO:0000250"/>
    <property type="project" value="UniProtKB"/>
</dbReference>
<dbReference type="GO" id="GO:0015252">
    <property type="term" value="F:proton channel activity"/>
    <property type="evidence" value="ECO:0000250"/>
    <property type="project" value="UniProtKB"/>
</dbReference>
<dbReference type="GO" id="GO:0046933">
    <property type="term" value="F:proton-transporting ATP synthase activity, rotational mechanism"/>
    <property type="evidence" value="ECO:0007669"/>
    <property type="project" value="TreeGrafter"/>
</dbReference>
<dbReference type="GO" id="GO:0015986">
    <property type="term" value="P:proton motive force-driven ATP synthesis"/>
    <property type="evidence" value="ECO:0000250"/>
    <property type="project" value="UniProtKB"/>
</dbReference>
<dbReference type="GO" id="GO:1902600">
    <property type="term" value="P:proton transmembrane transport"/>
    <property type="evidence" value="ECO:0000250"/>
    <property type="project" value="UniProtKB"/>
</dbReference>
<dbReference type="CDD" id="cd00310">
    <property type="entry name" value="ATP-synt_Fo_a_6"/>
    <property type="match status" value="1"/>
</dbReference>
<dbReference type="FunFam" id="1.20.120.220:FF:000004">
    <property type="entry name" value="ATP synthase subunit a"/>
    <property type="match status" value="1"/>
</dbReference>
<dbReference type="Gene3D" id="1.20.120.220">
    <property type="entry name" value="ATP synthase, F0 complex, subunit A"/>
    <property type="match status" value="1"/>
</dbReference>
<dbReference type="InterPro" id="IPR000568">
    <property type="entry name" value="ATP_synth_F0_asu"/>
</dbReference>
<dbReference type="InterPro" id="IPR023011">
    <property type="entry name" value="ATP_synth_F0_asu_AS"/>
</dbReference>
<dbReference type="InterPro" id="IPR045083">
    <property type="entry name" value="ATP_synth_F0_asu_bact/mt"/>
</dbReference>
<dbReference type="InterPro" id="IPR035908">
    <property type="entry name" value="F0_ATP_A_sf"/>
</dbReference>
<dbReference type="NCBIfam" id="TIGR01131">
    <property type="entry name" value="ATP_synt_6_or_A"/>
    <property type="match status" value="1"/>
</dbReference>
<dbReference type="PANTHER" id="PTHR11410">
    <property type="entry name" value="ATP SYNTHASE SUBUNIT A"/>
    <property type="match status" value="1"/>
</dbReference>
<dbReference type="PANTHER" id="PTHR11410:SF0">
    <property type="entry name" value="ATP SYNTHASE SUBUNIT A"/>
    <property type="match status" value="1"/>
</dbReference>
<dbReference type="Pfam" id="PF00119">
    <property type="entry name" value="ATP-synt_A"/>
    <property type="match status" value="1"/>
</dbReference>
<dbReference type="PRINTS" id="PR00123">
    <property type="entry name" value="ATPASEA"/>
</dbReference>
<dbReference type="SUPFAM" id="SSF81336">
    <property type="entry name" value="F1F0 ATP synthase subunit A"/>
    <property type="match status" value="1"/>
</dbReference>
<dbReference type="PROSITE" id="PS00449">
    <property type="entry name" value="ATPASE_A"/>
    <property type="match status" value="1"/>
</dbReference>
<geneLocation type="mitochondrion"/>
<comment type="function">
    <text evidence="1">Subunit a, of the mitochondrial membrane ATP synthase complex (F(1)F(0) ATP synthase or Complex V) that produces ATP from ADP in the presence of a proton gradient across the membrane which is generated by electron transport complexes of the respiratory chain. ATP synthase complex consist of a soluble F(1) head domain - the catalytic core - and a membrane F(1) domain - the membrane proton channel. These two domains are linked by a central stalk rotating inside the F(1) region and a stationary peripheral stalk. During catalysis, ATP synthesis in the catalytic domain of F(1) is coupled via a rotary mechanism of the central stalk subunits to proton translocation. With the subunit c (ATP5MC1), forms the proton-conducting channel in the F(0) domain, that contains two crucial half-channels (inlet and outlet) that facilitate proton movement from the mitochondrial intermembrane space (IMS) into the matrix. Protons are taken up via the inlet half-channel and released through the outlet half-channel, following a Grotthuss mechanism.</text>
</comment>
<comment type="catalytic activity">
    <reaction evidence="1">
        <text>H(+)(in) = H(+)(out)</text>
        <dbReference type="Rhea" id="RHEA:34979"/>
        <dbReference type="ChEBI" id="CHEBI:15378"/>
    </reaction>
</comment>
<comment type="subunit">
    <text evidence="1">Component of the ATP synthase complex composed at least of ATP5F1A/subunit alpha, ATP5F1B/subunit beta, ATP5MC1/subunit c (homooctomer), MT-ATP6/subunit a, MT-ATP8/subunit 8, ATP5ME/subunit e, ATP5MF/subunit f, ATP5MG/subunit g, ATP5MK/subunit k, ATP5MJ/subunit j, ATP5F1C/subunit gamma, ATP5F1D/subunit delta, ATP5F1E/subunit epsilon, ATP5PF/subunit F6, ATP5PB/subunit b, ATP5PD/subunit d, ATP5PO/subunit OSCP. ATP synthase complex consists of a soluble F(1) head domain (subunits alpha(3) and beta(3)) - the catalytic core - and a membrane F(0) domain - the membrane proton channel (subunits c, a, 8, e, f, g, k and j). These two domains are linked by a central stalk (subunits gamma, delta, and epsilon) rotating inside the F1 region and a stationary peripheral stalk (subunits F6, b, d, and OSCP). Interacts with DNAJC30; interaction is direct.</text>
</comment>
<comment type="subcellular location">
    <subcellularLocation>
        <location>Mitochondrion inner membrane</location>
        <topology>Multi-pass membrane protein</topology>
    </subcellularLocation>
</comment>
<comment type="similarity">
    <text evidence="3">Belongs to the ATPase A chain family.</text>
</comment>
<feature type="chain" id="PRO_0000232875" description="ATP synthase F(0) complex subunit a">
    <location>
        <begin position="1"/>
        <end position="222"/>
    </location>
</feature>
<feature type="transmembrane region" description="Helical" evidence="2">
    <location>
        <begin position="7"/>
        <end position="27"/>
    </location>
</feature>
<feature type="transmembrane region" description="Helical" evidence="2">
    <location>
        <begin position="64"/>
        <end position="84"/>
    </location>
</feature>
<feature type="transmembrane region" description="Helical" evidence="2">
    <location>
        <begin position="93"/>
        <end position="113"/>
    </location>
</feature>
<feature type="transmembrane region" description="Helical" evidence="2">
    <location>
        <begin position="132"/>
        <end position="152"/>
    </location>
</feature>
<feature type="transmembrane region" description="Helical" evidence="2">
    <location>
        <begin position="160"/>
        <end position="180"/>
    </location>
</feature>
<feature type="transmembrane region" description="Helical" evidence="2">
    <location>
        <begin position="197"/>
        <end position="219"/>
    </location>
</feature>
<protein>
    <recommendedName>
        <fullName evidence="1">ATP synthase F(0) complex subunit a</fullName>
    </recommendedName>
    <alternativeName>
        <fullName>F-ATPase protein 6</fullName>
    </alternativeName>
    <alternativeName>
        <fullName evidence="1">Proton-conducting channel, ATP synthase F(0) complex subunit a</fullName>
    </alternativeName>
</protein>
<evidence type="ECO:0000250" key="1">
    <source>
        <dbReference type="UniProtKB" id="P00846"/>
    </source>
</evidence>
<evidence type="ECO:0000255" key="2"/>
<evidence type="ECO:0000305" key="3"/>
<reference key="1">
    <citation type="journal article" date="2006" name="PLoS Biol.">
        <title>Complete mitochondrial genome and phylogeny of Pleistocene mammoth Mammuthus primigenius.</title>
        <authorList>
            <person name="Rogaev E.I."/>
            <person name="Moliaka Y.K."/>
            <person name="Malyarchuk B.A."/>
            <person name="Kondrashov F.A."/>
            <person name="Derenko M.V."/>
            <person name="Chumakov I."/>
            <person name="Grigorenko A.P."/>
        </authorList>
    </citation>
    <scope>NUCLEOTIDE SEQUENCE [GENOMIC DNA]</scope>
    <source>
        <tissue>Blood</tissue>
    </source>
</reference>
<proteinExistence type="inferred from homology"/>
<accession>Q2I3G9</accession>
<organism>
    <name type="scientific">Elephas maximus</name>
    <name type="common">Indian elephant</name>
    <dbReference type="NCBI Taxonomy" id="9783"/>
    <lineage>
        <taxon>Eukaryota</taxon>
        <taxon>Metazoa</taxon>
        <taxon>Chordata</taxon>
        <taxon>Craniata</taxon>
        <taxon>Vertebrata</taxon>
        <taxon>Euteleostomi</taxon>
        <taxon>Mammalia</taxon>
        <taxon>Eutheria</taxon>
        <taxon>Afrotheria</taxon>
        <taxon>Proboscidea</taxon>
        <taxon>Elephantidae</taxon>
        <taxon>Elephas</taxon>
    </lineage>
</organism>
<name>ATP6_ELEMA</name>
<sequence>MNEELSAFFDVPVGTMMLAIAFPAILLPTPNRLITNRWITIQQWLIQLIMKQLLSIHNMKGLSWSLMLITLTLFIGLTNLLGLLPYSFAPTTQLTVNLSMAIPLWTGTVVLGFRYKTKISLAHLLPQGTPTFLIPMIIIIETISLLIRPITLAVRLTANITAGHLLIHLTGSAALTLLSVHLMTITVTFITVVMLTILELAVALIQAYVFALLISLYLHESA</sequence>
<keyword id="KW-0066">ATP synthesis</keyword>
<keyword id="KW-0138">CF(0)</keyword>
<keyword id="KW-0375">Hydrogen ion transport</keyword>
<keyword id="KW-0406">Ion transport</keyword>
<keyword id="KW-0472">Membrane</keyword>
<keyword id="KW-0496">Mitochondrion</keyword>
<keyword id="KW-0999">Mitochondrion inner membrane</keyword>
<keyword id="KW-0812">Transmembrane</keyword>
<keyword id="KW-1133">Transmembrane helix</keyword>
<keyword id="KW-0813">Transport</keyword>
<gene>
    <name evidence="1" type="primary">MT-ATP6</name>
    <name type="synonym">ATP6</name>
    <name type="synonym">ATPASE6</name>
    <name type="synonym">MTATP6</name>
</gene>